<keyword id="KW-0963">Cytoplasm</keyword>
<keyword id="KW-0378">Hydrolase</keyword>
<keyword id="KW-0645">Protease</keyword>
<keyword id="KW-1185">Reference proteome</keyword>
<keyword id="KW-0720">Serine protease</keyword>
<accession>Q5NNY8</accession>
<feature type="chain" id="PRO_0000179727" description="ATP-dependent Clp protease proteolytic subunit">
    <location>
        <begin position="1"/>
        <end position="210"/>
    </location>
</feature>
<feature type="active site" description="Nucleophile" evidence="1">
    <location>
        <position position="107"/>
    </location>
</feature>
<feature type="active site" evidence="1">
    <location>
        <position position="132"/>
    </location>
</feature>
<proteinExistence type="inferred from homology"/>
<comment type="function">
    <text evidence="1">Cleaves peptides in various proteins in a process that requires ATP hydrolysis. Has a chymotrypsin-like activity. Plays a major role in the degradation of misfolded proteins.</text>
</comment>
<comment type="catalytic activity">
    <reaction evidence="1">
        <text>Hydrolysis of proteins to small peptides in the presence of ATP and magnesium. alpha-casein is the usual test substrate. In the absence of ATP, only oligopeptides shorter than five residues are hydrolyzed (such as succinyl-Leu-Tyr-|-NHMec, and Leu-Tyr-Leu-|-Tyr-Trp, in which cleavage of the -Tyr-|-Leu- and -Tyr-|-Trp bonds also occurs).</text>
        <dbReference type="EC" id="3.4.21.92"/>
    </reaction>
</comment>
<comment type="subunit">
    <text evidence="1">Fourteen ClpP subunits assemble into 2 heptameric rings which stack back to back to give a disk-like structure with a central cavity, resembling the structure of eukaryotic proteasomes.</text>
</comment>
<comment type="subcellular location">
    <subcellularLocation>
        <location evidence="1">Cytoplasm</location>
    </subcellularLocation>
</comment>
<comment type="similarity">
    <text evidence="1">Belongs to the peptidase S14 family.</text>
</comment>
<organism>
    <name type="scientific">Zymomonas mobilis subsp. mobilis (strain ATCC 31821 / ZM4 / CP4)</name>
    <dbReference type="NCBI Taxonomy" id="264203"/>
    <lineage>
        <taxon>Bacteria</taxon>
        <taxon>Pseudomonadati</taxon>
        <taxon>Pseudomonadota</taxon>
        <taxon>Alphaproteobacteria</taxon>
        <taxon>Sphingomonadales</taxon>
        <taxon>Zymomonadaceae</taxon>
        <taxon>Zymomonas</taxon>
    </lineage>
</organism>
<evidence type="ECO:0000255" key="1">
    <source>
        <dbReference type="HAMAP-Rule" id="MF_00444"/>
    </source>
</evidence>
<name>CLPP_ZYMMO</name>
<sequence length="210" mass="23352">MSHDHADIVNALIPMVVEQSNRGERSFDIYSRLLRERIIFVTGQVEDHMASVICAQLLFLEAENPKKDIFLYINSPGGVVTAGLAIHDTMQYIRPKVGTLCIGQAASMGSFLLAAGEPGMRVATTNSRIMIHQPSGGAQGMAADIEIQAREILRMRKRLNALYAKYTNQPIEEIEKAMDRDNFLEADEAKAFGLIDKVFDKRPVASEEKE</sequence>
<reference key="1">
    <citation type="journal article" date="2005" name="Nat. Biotechnol.">
        <title>The genome sequence of the ethanologenic bacterium Zymomonas mobilis ZM4.</title>
        <authorList>
            <person name="Seo J.-S."/>
            <person name="Chong H."/>
            <person name="Park H.S."/>
            <person name="Yoon K.-O."/>
            <person name="Jung C."/>
            <person name="Kim J.J."/>
            <person name="Hong J.H."/>
            <person name="Kim H."/>
            <person name="Kim J.-H."/>
            <person name="Kil J.-I."/>
            <person name="Park C.J."/>
            <person name="Oh H.-M."/>
            <person name="Lee J.-S."/>
            <person name="Jin S.-J."/>
            <person name="Um H.-W."/>
            <person name="Lee H.-J."/>
            <person name="Oh S.-J."/>
            <person name="Kim J.Y."/>
            <person name="Kang H.L."/>
            <person name="Lee S.Y."/>
            <person name="Lee K.J."/>
            <person name="Kang H.S."/>
        </authorList>
    </citation>
    <scope>NUCLEOTIDE SEQUENCE [LARGE SCALE GENOMIC DNA]</scope>
    <source>
        <strain>ATCC 31821 / ZM4 / CP4</strain>
    </source>
</reference>
<protein>
    <recommendedName>
        <fullName evidence="1">ATP-dependent Clp protease proteolytic subunit</fullName>
        <ecNumber evidence="1">3.4.21.92</ecNumber>
    </recommendedName>
    <alternativeName>
        <fullName evidence="1">Endopeptidase Clp</fullName>
    </alternativeName>
</protein>
<dbReference type="EC" id="3.4.21.92" evidence="1"/>
<dbReference type="EMBL" id="AE008692">
    <property type="protein sequence ID" value="AAV89572.1"/>
    <property type="molecule type" value="Genomic_DNA"/>
</dbReference>
<dbReference type="RefSeq" id="WP_011240805.1">
    <property type="nucleotide sequence ID" value="NZ_CP023715.1"/>
</dbReference>
<dbReference type="SMR" id="Q5NNY8"/>
<dbReference type="STRING" id="264203.ZMO0948"/>
<dbReference type="MEROPS" id="S14.001"/>
<dbReference type="GeneID" id="79903903"/>
<dbReference type="KEGG" id="zmo:ZMO0948"/>
<dbReference type="eggNOG" id="COG0740">
    <property type="taxonomic scope" value="Bacteria"/>
</dbReference>
<dbReference type="HOGENOM" id="CLU_058707_3_2_5"/>
<dbReference type="Proteomes" id="UP000001173">
    <property type="component" value="Chromosome"/>
</dbReference>
<dbReference type="GO" id="GO:0005737">
    <property type="term" value="C:cytoplasm"/>
    <property type="evidence" value="ECO:0007669"/>
    <property type="project" value="UniProtKB-SubCell"/>
</dbReference>
<dbReference type="GO" id="GO:0009368">
    <property type="term" value="C:endopeptidase Clp complex"/>
    <property type="evidence" value="ECO:0007669"/>
    <property type="project" value="TreeGrafter"/>
</dbReference>
<dbReference type="GO" id="GO:0004176">
    <property type="term" value="F:ATP-dependent peptidase activity"/>
    <property type="evidence" value="ECO:0007669"/>
    <property type="project" value="InterPro"/>
</dbReference>
<dbReference type="GO" id="GO:0051117">
    <property type="term" value="F:ATPase binding"/>
    <property type="evidence" value="ECO:0007669"/>
    <property type="project" value="TreeGrafter"/>
</dbReference>
<dbReference type="GO" id="GO:0004252">
    <property type="term" value="F:serine-type endopeptidase activity"/>
    <property type="evidence" value="ECO:0007669"/>
    <property type="project" value="UniProtKB-UniRule"/>
</dbReference>
<dbReference type="GO" id="GO:0006515">
    <property type="term" value="P:protein quality control for misfolded or incompletely synthesized proteins"/>
    <property type="evidence" value="ECO:0007669"/>
    <property type="project" value="TreeGrafter"/>
</dbReference>
<dbReference type="CDD" id="cd07017">
    <property type="entry name" value="S14_ClpP_2"/>
    <property type="match status" value="1"/>
</dbReference>
<dbReference type="FunFam" id="3.90.226.10:FF:000001">
    <property type="entry name" value="ATP-dependent Clp protease proteolytic subunit"/>
    <property type="match status" value="1"/>
</dbReference>
<dbReference type="Gene3D" id="3.90.226.10">
    <property type="entry name" value="2-enoyl-CoA Hydratase, Chain A, domain 1"/>
    <property type="match status" value="1"/>
</dbReference>
<dbReference type="HAMAP" id="MF_00444">
    <property type="entry name" value="ClpP"/>
    <property type="match status" value="1"/>
</dbReference>
<dbReference type="InterPro" id="IPR001907">
    <property type="entry name" value="ClpP"/>
</dbReference>
<dbReference type="InterPro" id="IPR029045">
    <property type="entry name" value="ClpP/crotonase-like_dom_sf"/>
</dbReference>
<dbReference type="InterPro" id="IPR023562">
    <property type="entry name" value="ClpP/TepA"/>
</dbReference>
<dbReference type="InterPro" id="IPR018215">
    <property type="entry name" value="ClpP_Ser_AS"/>
</dbReference>
<dbReference type="NCBIfam" id="TIGR00493">
    <property type="entry name" value="clpP"/>
    <property type="match status" value="1"/>
</dbReference>
<dbReference type="NCBIfam" id="NF001368">
    <property type="entry name" value="PRK00277.1"/>
    <property type="match status" value="1"/>
</dbReference>
<dbReference type="NCBIfam" id="NF009205">
    <property type="entry name" value="PRK12553.1"/>
    <property type="match status" value="1"/>
</dbReference>
<dbReference type="PANTHER" id="PTHR10381">
    <property type="entry name" value="ATP-DEPENDENT CLP PROTEASE PROTEOLYTIC SUBUNIT"/>
    <property type="match status" value="1"/>
</dbReference>
<dbReference type="PANTHER" id="PTHR10381:SF11">
    <property type="entry name" value="ATP-DEPENDENT CLP PROTEASE PROTEOLYTIC SUBUNIT, MITOCHONDRIAL"/>
    <property type="match status" value="1"/>
</dbReference>
<dbReference type="Pfam" id="PF00574">
    <property type="entry name" value="CLP_protease"/>
    <property type="match status" value="1"/>
</dbReference>
<dbReference type="PRINTS" id="PR00127">
    <property type="entry name" value="CLPPROTEASEP"/>
</dbReference>
<dbReference type="SUPFAM" id="SSF52096">
    <property type="entry name" value="ClpP/crotonase"/>
    <property type="match status" value="1"/>
</dbReference>
<dbReference type="PROSITE" id="PS00381">
    <property type="entry name" value="CLP_PROTEASE_SER"/>
    <property type="match status" value="1"/>
</dbReference>
<gene>
    <name evidence="1" type="primary">clpP</name>
    <name type="ordered locus">ZMO0948</name>
</gene>